<proteinExistence type="evidence at protein level"/>
<keyword id="KW-0025">Alternative splicing</keyword>
<keyword id="KW-0067">ATP-binding</keyword>
<keyword id="KW-1003">Cell membrane</keyword>
<keyword id="KW-0217">Developmental protein</keyword>
<keyword id="KW-0221">Differentiation</keyword>
<keyword id="KW-1015">Disulfide bond</keyword>
<keyword id="KW-0256">Endoplasmic reticulum</keyword>
<keyword id="KW-0325">Glycoprotein</keyword>
<keyword id="KW-0418">Kinase</keyword>
<keyword id="KW-0433">Leucine-rich repeat</keyword>
<keyword id="KW-0472">Membrane</keyword>
<keyword id="KW-0547">Nucleotide-binding</keyword>
<keyword id="KW-0675">Receptor</keyword>
<keyword id="KW-1185">Reference proteome</keyword>
<keyword id="KW-0677">Repeat</keyword>
<keyword id="KW-0723">Serine/threonine-protein kinase</keyword>
<keyword id="KW-0732">Signal</keyword>
<keyword id="KW-0808">Transferase</keyword>
<keyword id="KW-0812">Transmembrane</keyword>
<keyword id="KW-1133">Transmembrane helix</keyword>
<organism>
    <name type="scientific">Arabidopsis thaliana</name>
    <name type="common">Mouse-ear cress</name>
    <dbReference type="NCBI Taxonomy" id="3702"/>
    <lineage>
        <taxon>Eukaryota</taxon>
        <taxon>Viridiplantae</taxon>
        <taxon>Streptophyta</taxon>
        <taxon>Embryophyta</taxon>
        <taxon>Tracheophyta</taxon>
        <taxon>Spermatophyta</taxon>
        <taxon>Magnoliopsida</taxon>
        <taxon>eudicotyledons</taxon>
        <taxon>Gunneridae</taxon>
        <taxon>Pentapetalae</taxon>
        <taxon>rosids</taxon>
        <taxon>malvids</taxon>
        <taxon>Brassicales</taxon>
        <taxon>Brassicaceae</taxon>
        <taxon>Camelineae</taxon>
        <taxon>Arabidopsis</taxon>
    </lineage>
</organism>
<evidence type="ECO:0000250" key="1">
    <source>
        <dbReference type="UniProtKB" id="Q94AG2"/>
    </source>
</evidence>
<evidence type="ECO:0000255" key="2"/>
<evidence type="ECO:0000255" key="3">
    <source>
        <dbReference type="PROSITE-ProRule" id="PRU00159"/>
    </source>
</evidence>
<evidence type="ECO:0000255" key="4">
    <source>
        <dbReference type="PROSITE-ProRule" id="PRU00498"/>
    </source>
</evidence>
<evidence type="ECO:0000255" key="5">
    <source>
        <dbReference type="PROSITE-ProRule" id="PRU10027"/>
    </source>
</evidence>
<evidence type="ECO:0000269" key="6">
    <source>
    </source>
</evidence>
<evidence type="ECO:0000269" key="7">
    <source>
    </source>
</evidence>
<evidence type="ECO:0000269" key="8">
    <source>
    </source>
</evidence>
<evidence type="ECO:0000269" key="9">
    <source>
    </source>
</evidence>
<evidence type="ECO:0000269" key="10">
    <source>
    </source>
</evidence>
<evidence type="ECO:0000303" key="11">
    <source>
    </source>
</evidence>
<evidence type="ECO:0000303" key="12">
    <source>
    </source>
</evidence>
<evidence type="ECO:0000305" key="13"/>
<evidence type="ECO:0000312" key="14">
    <source>
        <dbReference type="Araport" id="AT4G20270"/>
    </source>
</evidence>
<evidence type="ECO:0000312" key="15">
    <source>
        <dbReference type="EMBL" id="CAA18252.1"/>
    </source>
</evidence>
<name>BAME3_ARATH</name>
<gene>
    <name evidence="11" type="primary">BAM3</name>
    <name evidence="14" type="ordered locus">At4g20270</name>
    <name evidence="15" type="ORF">F1C12.190</name>
</gene>
<comment type="function">
    <text evidence="6 7 8 9 10">Necessary for male gametophyte development, as well as ovule specification and function (PubMed:16367950). Required for the development of high-ordered vascular strands within the leaf and a correlated control of leaf shape, size and symmetry (PubMed:16367950). LRR-rich receptor-like kinase (LRR-RLK) involved in the perception of CLE45 peptide ligand which mediates root growth inhibition by repressing protophloem differentiation; this mechanism requires CRN (PubMed:23569225, PubMed:25049386, PubMed:28607033). BRX, BAM3, and CLE45 act together to regulate the transition of protophloem cells from proliferation to differentiation, thus impinging on postembryonic growth capacity of the root meristem (PubMed:23569225, PubMed:25049386). Necessary for CLE45 peptide-triggered accumulation of MAKR5 in developing sieve elements (PubMed:27354416).</text>
</comment>
<comment type="catalytic activity">
    <reaction evidence="3">
        <text>L-seryl-[protein] + ATP = O-phospho-L-seryl-[protein] + ADP + H(+)</text>
        <dbReference type="Rhea" id="RHEA:17989"/>
        <dbReference type="Rhea" id="RHEA-COMP:9863"/>
        <dbReference type="Rhea" id="RHEA-COMP:11604"/>
        <dbReference type="ChEBI" id="CHEBI:15378"/>
        <dbReference type="ChEBI" id="CHEBI:29999"/>
        <dbReference type="ChEBI" id="CHEBI:30616"/>
        <dbReference type="ChEBI" id="CHEBI:83421"/>
        <dbReference type="ChEBI" id="CHEBI:456216"/>
        <dbReference type="EC" id="2.7.11.1"/>
    </reaction>
</comment>
<comment type="catalytic activity">
    <reaction evidence="3">
        <text>L-threonyl-[protein] + ATP = O-phospho-L-threonyl-[protein] + ADP + H(+)</text>
        <dbReference type="Rhea" id="RHEA:46608"/>
        <dbReference type="Rhea" id="RHEA-COMP:11060"/>
        <dbReference type="Rhea" id="RHEA-COMP:11605"/>
        <dbReference type="ChEBI" id="CHEBI:15378"/>
        <dbReference type="ChEBI" id="CHEBI:30013"/>
        <dbReference type="ChEBI" id="CHEBI:30616"/>
        <dbReference type="ChEBI" id="CHEBI:61977"/>
        <dbReference type="ChEBI" id="CHEBI:456216"/>
        <dbReference type="EC" id="2.7.11.1"/>
    </reaction>
</comment>
<comment type="subunit">
    <text evidence="10">Interacts with CLE45, especially in roots (PubMed:28607033). Binds to the dimer CLV2/CRN (PubMed:28607033).</text>
</comment>
<comment type="interaction">
    <interactant intactId="EBI-20653325">
        <id>O65440-2</id>
    </interactant>
    <interactant intactId="EBI-20654480">
        <id>C0LGR6</id>
        <label>At4g29180</label>
    </interactant>
    <organismsDiffer>false</organismsDiffer>
    <experiments>2</experiments>
</comment>
<comment type="interaction">
    <interactant intactId="EBI-20653325">
        <id>O65440-2</id>
    </interactant>
    <interactant intactId="EBI-16954266">
        <id>C0LGT1</id>
        <label>At5g10290</label>
    </interactant>
    <organismsDiffer>false</organismsDiffer>
    <experiments>2</experiments>
</comment>
<comment type="interaction">
    <interactant intactId="EBI-20653325">
        <id>O65440-2</id>
    </interactant>
    <interactant intactId="EBI-6298290">
        <id>Q9ASS4</id>
        <label>At5g48380</label>
    </interactant>
    <organismsDiffer>false</organismsDiffer>
    <experiments>2</experiments>
</comment>
<comment type="interaction">
    <interactant intactId="EBI-20653325">
        <id>O65440-2</id>
    </interactant>
    <interactant intactId="EBI-17123993">
        <id>Q9LT96</id>
        <label>At5g49770</label>
    </interactant>
    <organismsDiffer>false</organismsDiffer>
    <experiments>4</experiments>
</comment>
<comment type="interaction">
    <interactant intactId="EBI-20653325">
        <id>O65440-2</id>
    </interactant>
    <interactant intactId="EBI-20653325">
        <id>O65440-2</id>
        <label>BAM3</label>
    </interactant>
    <organismsDiffer>false</organismsDiffer>
    <experiments>2</experiments>
</comment>
<comment type="interaction">
    <interactant intactId="EBI-20653325">
        <id>O65440-2</id>
    </interactant>
    <interactant intactId="EBI-1797828">
        <id>O22476</id>
        <label>BRI1</label>
    </interactant>
    <organismsDiffer>false</organismsDiffer>
    <experiments>3</experiments>
</comment>
<comment type="interaction">
    <interactant intactId="EBI-20653325">
        <id>O65440-2</id>
    </interactant>
    <interactant intactId="EBI-2292728">
        <id>Q9ZPS9</id>
        <label>BRL2</label>
    </interactant>
    <organismsDiffer>false</organismsDiffer>
    <experiments>2</experiments>
</comment>
<comment type="interaction">
    <interactant intactId="EBI-20653325">
        <id>O65440-2</id>
    </interactant>
    <interactant intactId="EBI-1799448">
        <id>Q9FL28</id>
        <label>FLS2</label>
    </interactant>
    <organismsDiffer>false</organismsDiffer>
    <experiments>2</experiments>
</comment>
<comment type="interaction">
    <interactant intactId="EBI-20653325">
        <id>O65440-2</id>
    </interactant>
    <interactant intactId="EBI-20652801">
        <id>C0LGN2</id>
        <label>LRR-RLK</label>
    </interactant>
    <organismsDiffer>false</organismsDiffer>
    <experiments>3</experiments>
</comment>
<comment type="interaction">
    <interactant intactId="EBI-20653325">
        <id>O65440-2</id>
    </interactant>
    <interactant intactId="EBI-1238236">
        <id>F4K6B8</id>
        <label>RGI4</label>
    </interactant>
    <organismsDiffer>false</organismsDiffer>
    <experiments>2</experiments>
</comment>
<comment type="interaction">
    <interactant intactId="EBI-20653325">
        <id>O65440-2</id>
    </interactant>
    <interactant intactId="EBI-20652836">
        <id>Q9FYK0</id>
        <label>TMK2</label>
    </interactant>
    <organismsDiffer>false</organismsDiffer>
    <experiments>3</experiments>
</comment>
<comment type="subcellular location">
    <subcellularLocation>
        <location evidence="10">Cell membrane</location>
        <topology evidence="2">Single-pass type I membrane protein</topology>
    </subcellularLocation>
    <subcellularLocation>
        <location evidence="10">Endoplasmic reticulum membrane</location>
        <topology evidence="2">Single-pass type I membrane protein</topology>
    </subcellularLocation>
</comment>
<comment type="alternative products">
    <event type="alternative splicing"/>
    <isoform>
        <id>O65440-1</id>
        <name>1</name>
        <sequence type="displayed"/>
    </isoform>
    <isoform>
        <id>O65440-2</id>
        <name>2</name>
        <sequence type="described" ref="VSP_040681"/>
    </isoform>
</comment>
<comment type="tissue specificity">
    <text evidence="6 7 8">Expressed in seedlings, roots, leaves, stems, inflorescences, flowers and siliques (PubMed:16367950). In roots, confined to protophloem and sieve element precursor cells (PubMed:23569225, PubMed:25049386).</text>
</comment>
<comment type="developmental stage">
    <text evidence="7">Expressed in roots developing protophloem, up to the end of the transition zone.</text>
</comment>
<comment type="induction">
    <text evidence="7 10">Accumulates upon CLE45 peptide application (PubMed:23569225). Accumulation is promoted by CRN, especially at later stages of protophloem development (PubMed:28607033).</text>
</comment>
<comment type="disruption phenotype">
    <text evidence="6 7">When associated with BAM1 and BAM2 disruptions, loss of stem cells at the shoot and flower meristems. The disruption of BAM3 restores root protophloem and mersitem phenotypes observed in brx mutants (PubMed:23569225). The bam3 mutant resists to root growth inhibition mediated by CLE45 peptide ligand (PubMed:23569225).</text>
</comment>
<comment type="similarity">
    <text evidence="3">Belongs to the protein kinase superfamily. Ser/Thr protein kinase family.</text>
</comment>
<reference key="1">
    <citation type="journal article" date="1999" name="Nature">
        <title>Sequence and analysis of chromosome 4 of the plant Arabidopsis thaliana.</title>
        <authorList>
            <person name="Mayer K.F.X."/>
            <person name="Schueller C."/>
            <person name="Wambutt R."/>
            <person name="Murphy G."/>
            <person name="Volckaert G."/>
            <person name="Pohl T."/>
            <person name="Duesterhoeft A."/>
            <person name="Stiekema W."/>
            <person name="Entian K.-D."/>
            <person name="Terryn N."/>
            <person name="Harris B."/>
            <person name="Ansorge W."/>
            <person name="Brandt P."/>
            <person name="Grivell L.A."/>
            <person name="Rieger M."/>
            <person name="Weichselgartner M."/>
            <person name="de Simone V."/>
            <person name="Obermaier B."/>
            <person name="Mache R."/>
            <person name="Mueller M."/>
            <person name="Kreis M."/>
            <person name="Delseny M."/>
            <person name="Puigdomenech P."/>
            <person name="Watson M."/>
            <person name="Schmidtheini T."/>
            <person name="Reichert B."/>
            <person name="Portetelle D."/>
            <person name="Perez-Alonso M."/>
            <person name="Boutry M."/>
            <person name="Bancroft I."/>
            <person name="Vos P."/>
            <person name="Hoheisel J."/>
            <person name="Zimmermann W."/>
            <person name="Wedler H."/>
            <person name="Ridley P."/>
            <person name="Langham S.-A."/>
            <person name="McCullagh B."/>
            <person name="Bilham L."/>
            <person name="Robben J."/>
            <person name="van der Schueren J."/>
            <person name="Grymonprez B."/>
            <person name="Chuang Y.-J."/>
            <person name="Vandenbussche F."/>
            <person name="Braeken M."/>
            <person name="Weltjens I."/>
            <person name="Voet M."/>
            <person name="Bastiaens I."/>
            <person name="Aert R."/>
            <person name="Defoor E."/>
            <person name="Weitzenegger T."/>
            <person name="Bothe G."/>
            <person name="Ramsperger U."/>
            <person name="Hilbert H."/>
            <person name="Braun M."/>
            <person name="Holzer E."/>
            <person name="Brandt A."/>
            <person name="Peters S."/>
            <person name="van Staveren M."/>
            <person name="Dirkse W."/>
            <person name="Mooijman P."/>
            <person name="Klein Lankhorst R."/>
            <person name="Rose M."/>
            <person name="Hauf J."/>
            <person name="Koetter P."/>
            <person name="Berneiser S."/>
            <person name="Hempel S."/>
            <person name="Feldpausch M."/>
            <person name="Lamberth S."/>
            <person name="Van den Daele H."/>
            <person name="De Keyser A."/>
            <person name="Buysshaert C."/>
            <person name="Gielen J."/>
            <person name="Villarroel R."/>
            <person name="De Clercq R."/>
            <person name="van Montagu M."/>
            <person name="Rogers J."/>
            <person name="Cronin A."/>
            <person name="Quail M.A."/>
            <person name="Bray-Allen S."/>
            <person name="Clark L."/>
            <person name="Doggett J."/>
            <person name="Hall S."/>
            <person name="Kay M."/>
            <person name="Lennard N."/>
            <person name="McLay K."/>
            <person name="Mayes R."/>
            <person name="Pettett A."/>
            <person name="Rajandream M.A."/>
            <person name="Lyne M."/>
            <person name="Benes V."/>
            <person name="Rechmann S."/>
            <person name="Borkova D."/>
            <person name="Bloecker H."/>
            <person name="Scharfe M."/>
            <person name="Grimm M."/>
            <person name="Loehnert T.-H."/>
            <person name="Dose S."/>
            <person name="de Haan M."/>
            <person name="Maarse A.C."/>
            <person name="Schaefer M."/>
            <person name="Mueller-Auer S."/>
            <person name="Gabel C."/>
            <person name="Fuchs M."/>
            <person name="Fartmann B."/>
            <person name="Granderath K."/>
            <person name="Dauner D."/>
            <person name="Herzl A."/>
            <person name="Neumann S."/>
            <person name="Argiriou A."/>
            <person name="Vitale D."/>
            <person name="Liguori R."/>
            <person name="Piravandi E."/>
            <person name="Massenet O."/>
            <person name="Quigley F."/>
            <person name="Clabauld G."/>
            <person name="Muendlein A."/>
            <person name="Felber R."/>
            <person name="Schnabl S."/>
            <person name="Hiller R."/>
            <person name="Schmidt W."/>
            <person name="Lecharny A."/>
            <person name="Aubourg S."/>
            <person name="Chefdor F."/>
            <person name="Cooke R."/>
            <person name="Berger C."/>
            <person name="Monfort A."/>
            <person name="Casacuberta E."/>
            <person name="Gibbons T."/>
            <person name="Weber N."/>
            <person name="Vandenbol M."/>
            <person name="Bargues M."/>
            <person name="Terol J."/>
            <person name="Torres A."/>
            <person name="Perez-Perez A."/>
            <person name="Purnelle B."/>
            <person name="Bent E."/>
            <person name="Johnson S."/>
            <person name="Tacon D."/>
            <person name="Jesse T."/>
            <person name="Heijnen L."/>
            <person name="Schwarz S."/>
            <person name="Scholler P."/>
            <person name="Heber S."/>
            <person name="Francs P."/>
            <person name="Bielke C."/>
            <person name="Frishman D."/>
            <person name="Haase D."/>
            <person name="Lemcke K."/>
            <person name="Mewes H.-W."/>
            <person name="Stocker S."/>
            <person name="Zaccaria P."/>
            <person name="Bevan M."/>
            <person name="Wilson R.K."/>
            <person name="de la Bastide M."/>
            <person name="Habermann K."/>
            <person name="Parnell L."/>
            <person name="Dedhia N."/>
            <person name="Gnoj L."/>
            <person name="Schutz K."/>
            <person name="Huang E."/>
            <person name="Spiegel L."/>
            <person name="Sekhon M."/>
            <person name="Murray J."/>
            <person name="Sheet P."/>
            <person name="Cordes M."/>
            <person name="Abu-Threideh J."/>
            <person name="Stoneking T."/>
            <person name="Kalicki J."/>
            <person name="Graves T."/>
            <person name="Harmon G."/>
            <person name="Edwards J."/>
            <person name="Latreille P."/>
            <person name="Courtney L."/>
            <person name="Cloud J."/>
            <person name="Abbott A."/>
            <person name="Scott K."/>
            <person name="Johnson D."/>
            <person name="Minx P."/>
            <person name="Bentley D."/>
            <person name="Fulton B."/>
            <person name="Miller N."/>
            <person name="Greco T."/>
            <person name="Kemp K."/>
            <person name="Kramer J."/>
            <person name="Fulton L."/>
            <person name="Mardis E."/>
            <person name="Dante M."/>
            <person name="Pepin K."/>
            <person name="Hillier L.W."/>
            <person name="Nelson J."/>
            <person name="Spieth J."/>
            <person name="Ryan E."/>
            <person name="Andrews S."/>
            <person name="Geisel C."/>
            <person name="Layman D."/>
            <person name="Du H."/>
            <person name="Ali J."/>
            <person name="Berghoff A."/>
            <person name="Jones K."/>
            <person name="Drone K."/>
            <person name="Cotton M."/>
            <person name="Joshu C."/>
            <person name="Antonoiu B."/>
            <person name="Zidanic M."/>
            <person name="Strong C."/>
            <person name="Sun H."/>
            <person name="Lamar B."/>
            <person name="Yordan C."/>
            <person name="Ma P."/>
            <person name="Zhong J."/>
            <person name="Preston R."/>
            <person name="Vil D."/>
            <person name="Shekher M."/>
            <person name="Matero A."/>
            <person name="Shah R."/>
            <person name="Swaby I.K."/>
            <person name="O'Shaughnessy A."/>
            <person name="Rodriguez M."/>
            <person name="Hoffman J."/>
            <person name="Till S."/>
            <person name="Granat S."/>
            <person name="Shohdy N."/>
            <person name="Hasegawa A."/>
            <person name="Hameed A."/>
            <person name="Lodhi M."/>
            <person name="Johnson A."/>
            <person name="Chen E."/>
            <person name="Marra M.A."/>
            <person name="Martienssen R."/>
            <person name="McCombie W.R."/>
        </authorList>
    </citation>
    <scope>NUCLEOTIDE SEQUENCE [LARGE SCALE GENOMIC DNA]</scope>
    <source>
        <strain>cv. Columbia</strain>
    </source>
</reference>
<reference key="2">
    <citation type="journal article" date="2017" name="Plant J.">
        <title>Araport11: a complete reannotation of the Arabidopsis thaliana reference genome.</title>
        <authorList>
            <person name="Cheng C.Y."/>
            <person name="Krishnakumar V."/>
            <person name="Chan A.P."/>
            <person name="Thibaud-Nissen F."/>
            <person name="Schobel S."/>
            <person name="Town C.D."/>
        </authorList>
    </citation>
    <scope>GENOME REANNOTATION</scope>
    <source>
        <strain>cv. Columbia</strain>
    </source>
</reference>
<reference key="3">
    <citation type="journal article" date="2010" name="BMC Genomics">
        <title>Genome-wide cloning and sequence analysis of leucine-rich repeat receptor-like protein kinase genes in Arabidopsis thaliana.</title>
        <authorList>
            <person name="Gou X."/>
            <person name="He K."/>
            <person name="Yang H."/>
            <person name="Yuan T."/>
            <person name="Lin H."/>
            <person name="Clouse S.D."/>
            <person name="Li J."/>
        </authorList>
    </citation>
    <scope>NUCLEOTIDE SEQUENCE [LARGE SCALE MRNA] (ISOFORM 2)</scope>
    <source>
        <strain>cv. Columbia</strain>
    </source>
</reference>
<reference key="4">
    <citation type="submission" date="2006-07" db="EMBL/GenBank/DDBJ databases">
        <title>Large-scale analysis of RIKEN Arabidopsis full-length (RAFL) cDNAs.</title>
        <authorList>
            <person name="Totoki Y."/>
            <person name="Seki M."/>
            <person name="Ishida J."/>
            <person name="Nakajima M."/>
            <person name="Enju A."/>
            <person name="Kamiya A."/>
            <person name="Narusaka M."/>
            <person name="Shin-i T."/>
            <person name="Nakagawa M."/>
            <person name="Sakamoto N."/>
            <person name="Oishi K."/>
            <person name="Kohara Y."/>
            <person name="Kobayashi M."/>
            <person name="Toyoda A."/>
            <person name="Sakaki Y."/>
            <person name="Sakurai T."/>
            <person name="Iida K."/>
            <person name="Akiyama K."/>
            <person name="Satou M."/>
            <person name="Toyoda T."/>
            <person name="Konagaya A."/>
            <person name="Carninci P."/>
            <person name="Kawai J."/>
            <person name="Hayashizaki Y."/>
            <person name="Shinozaki K."/>
        </authorList>
    </citation>
    <scope>NUCLEOTIDE SEQUENCE [LARGE SCALE MRNA] (ISOFORM 1)</scope>
    <source>
        <strain>cv. Columbia</strain>
    </source>
</reference>
<reference key="5">
    <citation type="journal article" date="2006" name="Plant J.">
        <title>The CLAVATA1-related BAM1, BAM2 and BAM3 receptor kinase-like proteins are required for meristem function in Arabidopsis.</title>
        <authorList>
            <person name="DeYoung B.J."/>
            <person name="Bickle K.L."/>
            <person name="Schrage K.J."/>
            <person name="Muskett P."/>
            <person name="Patel K."/>
            <person name="Clark S.E."/>
        </authorList>
    </citation>
    <scope>FUNCTION</scope>
    <scope>DISRUPTION PHENOTYPE</scope>
    <scope>TISSUE SPECIFICITY</scope>
</reference>
<reference key="6">
    <citation type="journal article" date="2013" name="Proc. Natl. Acad. Sci. U.S.A.">
        <title>Suppression of Arabidopsis protophloem differentiation and root meristem growth by CLE45 requires the receptor-like kinase BAM3.</title>
        <authorList>
            <person name="Depuydt S."/>
            <person name="Rodriguez-Villalon A."/>
            <person name="Santuari L."/>
            <person name="Wyser-Rmili C."/>
            <person name="Ragni L."/>
            <person name="Hardtke C.S."/>
        </authorList>
    </citation>
    <scope>FUNCTION</scope>
    <scope>DISRUPTION PHENOTYPE</scope>
    <scope>DEVELOPMENTAL STAGE</scope>
    <scope>TISSUE SPECIFICITY</scope>
    <scope>INDUCTION BY CLE45</scope>
    <source>
        <strain>cv. Columbia</strain>
    </source>
</reference>
<reference key="7">
    <citation type="journal article" date="2014" name="Proc. Natl. Acad. Sci. U.S.A.">
        <title>Molecular genetic framework for protophloem formation.</title>
        <authorList>
            <person name="Rodriguez-Villalon A."/>
            <person name="Gujas B."/>
            <person name="Kang Y.H."/>
            <person name="Breda A.S."/>
            <person name="Cattaneo P."/>
            <person name="Depuydt S."/>
            <person name="Hardtke C.S."/>
        </authorList>
    </citation>
    <scope>FUNCTION</scope>
    <scope>TISSUE SPECIFICITY</scope>
</reference>
<reference key="8">
    <citation type="journal article" date="2016" name="EMBO Rep.">
        <title>Arabidopsis MAKR5 is a positive effector of BAM3-dependent CLE45 signaling.</title>
        <authorList>
            <person name="Kang Y.H."/>
            <person name="Hardtke C.S."/>
        </authorList>
    </citation>
    <scope>FUNCTION</scope>
    <source>
        <strain>cv. Columbia</strain>
    </source>
</reference>
<reference key="9">
    <citation type="journal article" date="2017" name="EMBO Rep.">
        <title>Perception of root-active CLE peptides requires CORYNE function in the phloem vasculature.</title>
        <authorList>
            <person name="Hazak O."/>
            <person name="Brandt B."/>
            <person name="Cattaneo P."/>
            <person name="Santiago J."/>
            <person name="Rodriguez-Villalon A."/>
            <person name="Hothorn M."/>
            <person name="Hardtke C.S."/>
        </authorList>
    </citation>
    <scope>FUNCTION</scope>
    <scope>MUTAGENESIS OF THR-150; 226-GLN--TYR-231; SER-303; GLY-364; PRO-883 AND GLY-901</scope>
    <scope>INTERACTION WITH CLE45</scope>
    <scope>SUBUNIT</scope>
    <scope>SUBCELLULAR LOCATION</scope>
    <scope>INDUCTION BY CRN</scope>
    <source>
        <strain>cv. Columbia</strain>
    </source>
</reference>
<accession>O65440</accession>
<accession>C0LGQ6</accession>
<dbReference type="EC" id="2.7.11.1" evidence="3"/>
<dbReference type="EMBL" id="AL022224">
    <property type="protein sequence ID" value="CAA18252.1"/>
    <property type="molecule type" value="Genomic_DNA"/>
</dbReference>
<dbReference type="EMBL" id="AL161552">
    <property type="protein sequence ID" value="CAB79027.1"/>
    <property type="molecule type" value="Genomic_DNA"/>
</dbReference>
<dbReference type="EMBL" id="CP002687">
    <property type="protein sequence ID" value="AEE84297.1"/>
    <property type="molecule type" value="Genomic_DNA"/>
</dbReference>
<dbReference type="EMBL" id="FJ708747">
    <property type="protein sequence ID" value="ACN59341.1"/>
    <property type="molecule type" value="mRNA"/>
</dbReference>
<dbReference type="EMBL" id="AK229453">
    <property type="status" value="NOT_ANNOTATED_CDS"/>
    <property type="molecule type" value="mRNA"/>
</dbReference>
<dbReference type="PIR" id="T05335">
    <property type="entry name" value="T05335"/>
</dbReference>
<dbReference type="RefSeq" id="NP_193760.1">
    <molecule id="O65440-1"/>
    <property type="nucleotide sequence ID" value="NM_118146.5"/>
</dbReference>
<dbReference type="SMR" id="O65440"/>
<dbReference type="BioGRID" id="13066">
    <property type="interactions" value="44"/>
</dbReference>
<dbReference type="FunCoup" id="O65440">
    <property type="interactions" value="341"/>
</dbReference>
<dbReference type="IntAct" id="O65440">
    <property type="interactions" value="53"/>
</dbReference>
<dbReference type="STRING" id="3702.O65440"/>
<dbReference type="GlyCosmos" id="O65440">
    <property type="glycosylation" value="18 sites, No reported glycans"/>
</dbReference>
<dbReference type="GlyGen" id="O65440">
    <property type="glycosylation" value="18 sites"/>
</dbReference>
<dbReference type="iPTMnet" id="O65440"/>
<dbReference type="PaxDb" id="3702-AT4G20270.1"/>
<dbReference type="ProteomicsDB" id="240771">
    <molecule id="O65440-1"/>
</dbReference>
<dbReference type="EnsemblPlants" id="AT4G20270.1">
    <molecule id="O65440-1"/>
    <property type="protein sequence ID" value="AT4G20270.1"/>
    <property type="gene ID" value="AT4G20270"/>
</dbReference>
<dbReference type="GeneID" id="827774"/>
<dbReference type="Gramene" id="AT4G20270.1">
    <molecule id="O65440-1"/>
    <property type="protein sequence ID" value="AT4G20270.1"/>
    <property type="gene ID" value="AT4G20270"/>
</dbReference>
<dbReference type="KEGG" id="ath:AT4G20270"/>
<dbReference type="Araport" id="AT4G20270"/>
<dbReference type="TAIR" id="AT4G20270">
    <property type="gene designation" value="BAM3"/>
</dbReference>
<dbReference type="eggNOG" id="ENOG502QXPR">
    <property type="taxonomic scope" value="Eukaryota"/>
</dbReference>
<dbReference type="HOGENOM" id="CLU_000288_114_1_1"/>
<dbReference type="InParanoid" id="O65440"/>
<dbReference type="OMA" id="DSWNIPN"/>
<dbReference type="PhylomeDB" id="O65440"/>
<dbReference type="PRO" id="PR:O65440"/>
<dbReference type="Proteomes" id="UP000006548">
    <property type="component" value="Chromosome 4"/>
</dbReference>
<dbReference type="ExpressionAtlas" id="O65440">
    <property type="expression patterns" value="baseline and differential"/>
</dbReference>
<dbReference type="GO" id="GO:0005789">
    <property type="term" value="C:endoplasmic reticulum membrane"/>
    <property type="evidence" value="ECO:0000314"/>
    <property type="project" value="UniProtKB"/>
</dbReference>
<dbReference type="GO" id="GO:0005886">
    <property type="term" value="C:plasma membrane"/>
    <property type="evidence" value="ECO:0000314"/>
    <property type="project" value="UniProtKB"/>
</dbReference>
<dbReference type="GO" id="GO:0005524">
    <property type="term" value="F:ATP binding"/>
    <property type="evidence" value="ECO:0007669"/>
    <property type="project" value="UniProtKB-KW"/>
</dbReference>
<dbReference type="GO" id="GO:0042802">
    <property type="term" value="F:identical protein binding"/>
    <property type="evidence" value="ECO:0000353"/>
    <property type="project" value="IntAct"/>
</dbReference>
<dbReference type="GO" id="GO:0042277">
    <property type="term" value="F:peptide binding"/>
    <property type="evidence" value="ECO:0000353"/>
    <property type="project" value="UniProtKB"/>
</dbReference>
<dbReference type="GO" id="GO:0001653">
    <property type="term" value="F:peptide receptor activity"/>
    <property type="evidence" value="ECO:0000315"/>
    <property type="project" value="UniProtKB"/>
</dbReference>
<dbReference type="GO" id="GO:0106310">
    <property type="term" value="F:protein serine kinase activity"/>
    <property type="evidence" value="ECO:0007669"/>
    <property type="project" value="RHEA"/>
</dbReference>
<dbReference type="GO" id="GO:0004674">
    <property type="term" value="F:protein serine/threonine kinase activity"/>
    <property type="evidence" value="ECO:0007669"/>
    <property type="project" value="UniProtKB-KW"/>
</dbReference>
<dbReference type="GO" id="GO:0030154">
    <property type="term" value="P:cell differentiation"/>
    <property type="evidence" value="ECO:0007669"/>
    <property type="project" value="UniProtKB-KW"/>
</dbReference>
<dbReference type="GO" id="GO:0048437">
    <property type="term" value="P:floral organ development"/>
    <property type="evidence" value="ECO:0000316"/>
    <property type="project" value="TAIR"/>
</dbReference>
<dbReference type="GO" id="GO:0010078">
    <property type="term" value="P:maintenance of root meristem identity"/>
    <property type="evidence" value="ECO:0000315"/>
    <property type="project" value="UniProtKB"/>
</dbReference>
<dbReference type="GO" id="GO:0010088">
    <property type="term" value="P:phloem development"/>
    <property type="evidence" value="ECO:0000315"/>
    <property type="project" value="UniProtKB"/>
</dbReference>
<dbReference type="GO" id="GO:0045595">
    <property type="term" value="P:regulation of cell differentiation"/>
    <property type="evidence" value="ECO:0000315"/>
    <property type="project" value="UniProtKB"/>
</dbReference>
<dbReference type="GO" id="GO:0010075">
    <property type="term" value="P:regulation of meristem growth"/>
    <property type="evidence" value="ECO:0000316"/>
    <property type="project" value="TAIR"/>
</dbReference>
<dbReference type="FunFam" id="1.10.510.10:FF:000201">
    <property type="entry name" value="Leucine-rich repeat receptor-like serine/threonine-protein kinase"/>
    <property type="match status" value="1"/>
</dbReference>
<dbReference type="FunFam" id="3.30.200.20:FF:000292">
    <property type="entry name" value="Leucine-rich repeat receptor-like serine/threonine-protein kinase BAM1"/>
    <property type="match status" value="1"/>
</dbReference>
<dbReference type="FunFam" id="3.80.10.10:FF:000108">
    <property type="entry name" value="Leucine-rich repeat receptor-like serine/threonine-protein kinase BAM3"/>
    <property type="match status" value="1"/>
</dbReference>
<dbReference type="FunFam" id="3.80.10.10:FF:000371">
    <property type="entry name" value="Leucine-rich repeat receptor-like serine/threonine-protein kinase BAM3"/>
    <property type="match status" value="1"/>
</dbReference>
<dbReference type="FunFam" id="3.80.10.10:FF:000560">
    <property type="entry name" value="Leucine-rich repeat receptor-like serine/threonine-protein kinase BAM3"/>
    <property type="match status" value="1"/>
</dbReference>
<dbReference type="FunFam" id="3.80.10.10:FF:000646">
    <property type="entry name" value="Leucine-rich repeat receptor-like serine/threonine-protein kinase BAM3"/>
    <property type="match status" value="1"/>
</dbReference>
<dbReference type="Gene3D" id="3.30.200.20">
    <property type="entry name" value="Phosphorylase Kinase, domain 1"/>
    <property type="match status" value="1"/>
</dbReference>
<dbReference type="Gene3D" id="3.80.10.10">
    <property type="entry name" value="Ribonuclease Inhibitor"/>
    <property type="match status" value="4"/>
</dbReference>
<dbReference type="Gene3D" id="1.10.510.10">
    <property type="entry name" value="Transferase(Phosphotransferase) domain 1"/>
    <property type="match status" value="1"/>
</dbReference>
<dbReference type="InterPro" id="IPR011009">
    <property type="entry name" value="Kinase-like_dom_sf"/>
</dbReference>
<dbReference type="InterPro" id="IPR001611">
    <property type="entry name" value="Leu-rich_rpt"/>
</dbReference>
<dbReference type="InterPro" id="IPR003591">
    <property type="entry name" value="Leu-rich_rpt_typical-subtyp"/>
</dbReference>
<dbReference type="InterPro" id="IPR032675">
    <property type="entry name" value="LRR_dom_sf"/>
</dbReference>
<dbReference type="InterPro" id="IPR013210">
    <property type="entry name" value="LRR_N_plant-typ"/>
</dbReference>
<dbReference type="InterPro" id="IPR000719">
    <property type="entry name" value="Prot_kinase_dom"/>
</dbReference>
<dbReference type="InterPro" id="IPR008271">
    <property type="entry name" value="Ser/Thr_kinase_AS"/>
</dbReference>
<dbReference type="PANTHER" id="PTHR45974:SF260">
    <property type="entry name" value="PROTEIN KINASE DOMAIN-CONTAINING PROTEIN"/>
    <property type="match status" value="1"/>
</dbReference>
<dbReference type="PANTHER" id="PTHR45974">
    <property type="entry name" value="RECEPTOR-LIKE PROTEIN 55"/>
    <property type="match status" value="1"/>
</dbReference>
<dbReference type="Pfam" id="PF00560">
    <property type="entry name" value="LRR_1"/>
    <property type="match status" value="11"/>
</dbReference>
<dbReference type="Pfam" id="PF08263">
    <property type="entry name" value="LRRNT_2"/>
    <property type="match status" value="1"/>
</dbReference>
<dbReference type="Pfam" id="PF00069">
    <property type="entry name" value="Pkinase"/>
    <property type="match status" value="1"/>
</dbReference>
<dbReference type="SMART" id="SM00369">
    <property type="entry name" value="LRR_TYP"/>
    <property type="match status" value="9"/>
</dbReference>
<dbReference type="SMART" id="SM00220">
    <property type="entry name" value="S_TKc"/>
    <property type="match status" value="1"/>
</dbReference>
<dbReference type="SUPFAM" id="SSF52058">
    <property type="entry name" value="L domain-like"/>
    <property type="match status" value="1"/>
</dbReference>
<dbReference type="SUPFAM" id="SSF56112">
    <property type="entry name" value="Protein kinase-like (PK-like)"/>
    <property type="match status" value="1"/>
</dbReference>
<dbReference type="SUPFAM" id="SSF52047">
    <property type="entry name" value="RNI-like"/>
    <property type="match status" value="1"/>
</dbReference>
<dbReference type="PROSITE" id="PS51450">
    <property type="entry name" value="LRR"/>
    <property type="match status" value="13"/>
</dbReference>
<dbReference type="PROSITE" id="PS50011">
    <property type="entry name" value="PROTEIN_KINASE_DOM"/>
    <property type="match status" value="1"/>
</dbReference>
<dbReference type="PROSITE" id="PS00108">
    <property type="entry name" value="PROTEIN_KINASE_ST"/>
    <property type="match status" value="1"/>
</dbReference>
<feature type="signal peptide" evidence="2">
    <location>
        <begin position="1"/>
        <end position="21"/>
    </location>
</feature>
<feature type="chain" id="PRO_0000403354" description="Leucine-rich repeat receptor-like serine/threonine-protein kinase BAM3">
    <location>
        <begin position="22"/>
        <end position="992"/>
    </location>
</feature>
<feature type="topological domain" description="Extracellular" evidence="13">
    <location>
        <begin position="22"/>
        <end position="656"/>
    </location>
</feature>
<feature type="transmembrane region" description="Helical" evidence="2">
    <location>
        <begin position="657"/>
        <end position="677"/>
    </location>
</feature>
<feature type="topological domain" description="Cytoplasmic" evidence="13">
    <location>
        <begin position="678"/>
        <end position="992"/>
    </location>
</feature>
<feature type="repeat" description="LRR 1" evidence="2">
    <location>
        <begin position="75"/>
        <end position="99"/>
    </location>
</feature>
<feature type="repeat" description="LRR 2" evidence="2">
    <location>
        <begin position="100"/>
        <end position="124"/>
    </location>
</feature>
<feature type="repeat" description="LRR 3" evidence="2">
    <location>
        <begin position="126"/>
        <end position="148"/>
    </location>
</feature>
<feature type="repeat" description="LRR 4" evidence="2">
    <location>
        <begin position="150"/>
        <end position="173"/>
    </location>
</feature>
<feature type="repeat" description="LRR 5" evidence="2">
    <location>
        <begin position="174"/>
        <end position="199"/>
    </location>
</feature>
<feature type="repeat" description="LRR 6" evidence="2">
    <location>
        <begin position="201"/>
        <end position="221"/>
    </location>
</feature>
<feature type="repeat" description="LRR 7" evidence="2">
    <location>
        <begin position="246"/>
        <end position="270"/>
    </location>
</feature>
<feature type="repeat" description="LRR 8" evidence="2">
    <location>
        <begin position="271"/>
        <end position="294"/>
    </location>
</feature>
<feature type="repeat" description="LRR 9" evidence="2">
    <location>
        <begin position="296"/>
        <end position="320"/>
    </location>
</feature>
<feature type="repeat" description="LRR 10" evidence="2">
    <location>
        <begin position="322"/>
        <end position="342"/>
    </location>
</feature>
<feature type="repeat" description="LRR 11" evidence="2">
    <location>
        <begin position="343"/>
        <end position="366"/>
    </location>
</feature>
<feature type="repeat" description="LRR 12" evidence="2">
    <location>
        <begin position="368"/>
        <end position="391"/>
    </location>
</feature>
<feature type="repeat" description="LRR 13" evidence="2">
    <location>
        <begin position="393"/>
        <end position="414"/>
    </location>
</feature>
<feature type="repeat" description="LRR 14" evidence="2">
    <location>
        <begin position="415"/>
        <end position="438"/>
    </location>
</feature>
<feature type="repeat" description="LRR 15" evidence="2">
    <location>
        <begin position="439"/>
        <end position="462"/>
    </location>
</feature>
<feature type="repeat" description="LRR 16" evidence="2">
    <location>
        <begin position="465"/>
        <end position="489"/>
    </location>
</feature>
<feature type="repeat" description="LRR 17" evidence="2">
    <location>
        <begin position="491"/>
        <end position="513"/>
    </location>
</feature>
<feature type="repeat" description="LRR 18" evidence="2">
    <location>
        <begin position="514"/>
        <end position="536"/>
    </location>
</feature>
<feature type="repeat" description="LRR 19" evidence="2">
    <location>
        <begin position="537"/>
        <end position="561"/>
    </location>
</feature>
<feature type="repeat" description="LRR 20" evidence="2">
    <location>
        <begin position="563"/>
        <end position="585"/>
    </location>
</feature>
<feature type="repeat" description="LRR 21" evidence="2">
    <location>
        <begin position="586"/>
        <end position="610"/>
    </location>
</feature>
<feature type="domain" description="Protein kinase" evidence="3">
    <location>
        <begin position="710"/>
        <end position="992"/>
    </location>
</feature>
<feature type="short sequence motif" description="CLE45 peptide binding" evidence="10">
    <location>
        <begin position="226"/>
        <end position="231"/>
    </location>
</feature>
<feature type="active site" description="Proton acceptor" evidence="3 5">
    <location>
        <position position="836"/>
    </location>
</feature>
<feature type="binding site" evidence="3">
    <location>
        <begin position="716"/>
        <end position="724"/>
    </location>
    <ligand>
        <name>ATP</name>
        <dbReference type="ChEBI" id="CHEBI:30616"/>
    </ligand>
</feature>
<feature type="binding site" evidence="3">
    <location>
        <position position="738"/>
    </location>
    <ligand>
        <name>ATP</name>
        <dbReference type="ChEBI" id="CHEBI:30616"/>
    </ligand>
</feature>
<feature type="glycosylation site" description="N-linked (GlcNAc...) asparagine" evidence="4">
    <location>
        <position position="28"/>
    </location>
</feature>
<feature type="glycosylation site" description="N-linked (GlcNAc...) asparagine" evidence="4">
    <location>
        <position position="75"/>
    </location>
</feature>
<feature type="glycosylation site" description="N-linked (GlcNAc...) asparagine" evidence="4">
    <location>
        <position position="87"/>
    </location>
</feature>
<feature type="glycosylation site" description="N-linked (GlcNAc...) asparagine" evidence="4">
    <location>
        <position position="131"/>
    </location>
</feature>
<feature type="glycosylation site" description="N-linked (GlcNAc...) asparagine" evidence="4">
    <location>
        <position position="163"/>
    </location>
</feature>
<feature type="glycosylation site" description="N-linked (GlcNAc...) asparagine" evidence="4">
    <location>
        <position position="220"/>
    </location>
</feature>
<feature type="glycosylation site" description="N-linked (GlcNAc...) asparagine" evidence="4">
    <location>
        <position position="256"/>
    </location>
</feature>
<feature type="glycosylation site" description="N-linked (GlcNAc...) asparagine" evidence="4">
    <location>
        <position position="293"/>
    </location>
</feature>
<feature type="glycosylation site" description="N-linked (GlcNAc...) asparagine" evidence="4">
    <location>
        <position position="354"/>
    </location>
</feature>
<feature type="glycosylation site" description="N-linked (GlcNAc...) asparagine" evidence="4">
    <location>
        <position position="440"/>
    </location>
</feature>
<feature type="glycosylation site" description="N-linked (GlcNAc...) asparagine" evidence="4">
    <location>
        <position position="472"/>
    </location>
</feature>
<feature type="glycosylation site" description="N-linked (GlcNAc...) asparagine" evidence="4">
    <location>
        <position position="525"/>
    </location>
</feature>
<feature type="glycosylation site" description="N-linked (GlcNAc...) asparagine" evidence="4">
    <location>
        <position position="568"/>
    </location>
</feature>
<feature type="glycosylation site" description="N-linked (GlcNAc...) asparagine" evidence="4">
    <location>
        <position position="575"/>
    </location>
</feature>
<feature type="glycosylation site" description="N-linked (GlcNAc...) asparagine" evidence="4">
    <location>
        <position position="597"/>
    </location>
</feature>
<feature type="glycosylation site" description="N-linked (GlcNAc...) asparagine" evidence="4">
    <location>
        <position position="613"/>
    </location>
</feature>
<feature type="glycosylation site" description="N-linked (GlcNAc...) asparagine" evidence="4">
    <location>
        <position position="631"/>
    </location>
</feature>
<feature type="glycosylation site" description="N-linked (GlcNAc...) asparagine" evidence="4">
    <location>
        <position position="635"/>
    </location>
</feature>
<feature type="disulfide bond" evidence="1">
    <location>
        <begin position="64"/>
        <end position="71"/>
    </location>
</feature>
<feature type="splice variant" id="VSP_040681" description="In isoform 2." evidence="12">
    <location>
        <begin position="381"/>
        <end position="409"/>
    </location>
</feature>
<feature type="mutagenesis site" description="Insensitivity to root growth inhibition mediated by CLE45 peptide." evidence="10">
    <original>T</original>
    <variation>I</variation>
    <location>
        <position position="150"/>
    </location>
</feature>
<feature type="mutagenesis site" description="Strongly reduced binding to CLE45 and insensitivity to BRX-dependent root growth inhibition mediated by CLE45 peptide." evidence="10">
    <original>QLYLGY</original>
    <variation>AAAAAA</variation>
    <location>
        <begin position="226"/>
        <end position="231"/>
    </location>
</feature>
<feature type="mutagenesis site" description="Insensitivity to root growth inhibition mediated by CLE45 peptide." evidence="10">
    <original>S</original>
    <variation>F</variation>
    <location>
        <position position="303"/>
    </location>
</feature>
<feature type="mutagenesis site" description="Insensitivity to root growth inhibition mediated by CLE45 peptide." evidence="10">
    <original>G</original>
    <variation>R</variation>
    <location>
        <position position="364"/>
    </location>
</feature>
<feature type="mutagenesis site" description="Insensitivity to root growth inhibition mediated by CLE45 peptide." evidence="10">
    <original>P</original>
    <variation>S</variation>
    <location>
        <position position="883"/>
    </location>
</feature>
<feature type="mutagenesis site" description="Insensitivity to root growth inhibition mediated by CLE45 peptide." evidence="10">
    <original>G</original>
    <variation>E</variation>
    <location>
        <position position="901"/>
    </location>
</feature>
<feature type="sequence conflict" description="In Ref. 4; AK229453." evidence="13" ref="4">
    <original>Y</original>
    <variation>C</variation>
    <location>
        <position position="542"/>
    </location>
</feature>
<feature type="sequence conflict" description="In Ref. 3; ACN59341 and 4; AK229453." evidence="13" ref="3 4">
    <original>R</original>
    <variation>A</variation>
    <location>
        <position position="721"/>
    </location>
</feature>
<sequence>MADKIFTFFLILSSISPLLCSSLISPLNLSLIRQANVLISLKQSFDSYDPSLDSWNIPNFNSLCSWTGVSCDNLNQSITRLDLSNLNISGTISPEISRLSPSLVFLDISSNSFSGELPKEIYELSGLEVLNISSNVFEGELETRGFSQMTQLVTLDAYDNSFNGSLPLSLTTLTRLEHLDLGGNYFDGEIPRSYGSFLSLKFLSLSGNDLRGRIPNELANITTLVQLYLGYYNDYRGGIPADFGRLINLVHLDLANCSLKGSIPAELGNLKNLEVLFLQTNELTGSVPRELGNMTSLKTLDLSNNFLEGEIPLELSGLQKLQLFNLFFNRLHGEIPEFVSELPDLQILKLWHNNFTGKIPSKLGSNGNLIEIDLSTNKLTGLIPESLCFGRRLKILILFNNFLFGPLPEDLGQCEPLWRFRLGQNFLTSKLPKGLIYLPNLSLLELQNNFLTGEIPEEEAGNAQFSSLTQINLSNNRLSGPIPGSIRNLRSLQILLLGANRLSGQIPGEIGSLKSLLKIDMSRNNFSGKFPPEFGDCMSLTYLDLSHNQISGQIPVQISQIRILNYLNVSWNSFNQSLPNELGYMKSLTSADFSHNNFSGSVPTSGQFSYFNNTSFLGNPFLCGFSSNPCNGSQNQSQSQLLNQNNARSRGEISAKFKLFFGLGLLGFFLVFVVLAVVKNRRMRKNNPNLWKLIGFQKLGFRSEHILECVKENHVIGKGGRGIVYKGVMPNGEEVAVKKLLTITKGSSHDNGLAAEIQTLGRIRHRNIVRLLAFCSNKDVNLLVYEYMPNGSLGEVLHGKAGVFLKWETRLQIALEAAKGLCYLHHDCSPLIIHRDVKSNNILLGPEFEAHVADFGLAKFMMQDNGASECMSSIAGSYGYIAPEYAYTLRIDEKSDVYSFGVVLLELITGRKPVDNFGEEGIDIVQWSKIQTNCNRQGVVKIIDQRLSNIPLAEAMELFFVAMLCVQEHSVERPTMREVVQMISQAKQPNTF</sequence>
<protein>
    <recommendedName>
        <fullName evidence="11">Leucine-rich repeat receptor-like serine/threonine-protein kinase BAM3</fullName>
        <ecNumber evidence="3">2.7.11.1</ecNumber>
    </recommendedName>
    <alternativeName>
        <fullName evidence="11">Protein BARELY ANY MERISTEM 3</fullName>
    </alternativeName>
</protein>